<gene>
    <name evidence="1" type="primary">lolB</name>
    <name type="ordered locus">YpsIP31758_2068</name>
</gene>
<feature type="signal peptide" evidence="1">
    <location>
        <begin position="1"/>
        <end position="21"/>
    </location>
</feature>
<feature type="chain" id="PRO_1000058774" description="Outer-membrane lipoprotein LolB">
    <location>
        <begin position="22"/>
        <end position="207"/>
    </location>
</feature>
<feature type="lipid moiety-binding region" description="N-palmitoyl cysteine" evidence="1">
    <location>
        <position position="22"/>
    </location>
</feature>
<feature type="lipid moiety-binding region" description="S-diacylglycerol cysteine" evidence="1">
    <location>
        <position position="22"/>
    </location>
</feature>
<dbReference type="EMBL" id="CP000720">
    <property type="protein sequence ID" value="ABS48174.1"/>
    <property type="molecule type" value="Genomic_DNA"/>
</dbReference>
<dbReference type="RefSeq" id="WP_012105143.1">
    <property type="nucleotide sequence ID" value="NC_009708.1"/>
</dbReference>
<dbReference type="SMR" id="A7FIG3"/>
<dbReference type="KEGG" id="ypi:YpsIP31758_2068"/>
<dbReference type="HOGENOM" id="CLU_092816_1_1_6"/>
<dbReference type="Proteomes" id="UP000002412">
    <property type="component" value="Chromosome"/>
</dbReference>
<dbReference type="GO" id="GO:0009279">
    <property type="term" value="C:cell outer membrane"/>
    <property type="evidence" value="ECO:0007669"/>
    <property type="project" value="UniProtKB-SubCell"/>
</dbReference>
<dbReference type="GO" id="GO:0044874">
    <property type="term" value="P:lipoprotein localization to outer membrane"/>
    <property type="evidence" value="ECO:0007669"/>
    <property type="project" value="UniProtKB-UniRule"/>
</dbReference>
<dbReference type="GO" id="GO:0015031">
    <property type="term" value="P:protein transport"/>
    <property type="evidence" value="ECO:0007669"/>
    <property type="project" value="UniProtKB-KW"/>
</dbReference>
<dbReference type="CDD" id="cd16326">
    <property type="entry name" value="LolB"/>
    <property type="match status" value="1"/>
</dbReference>
<dbReference type="Gene3D" id="2.50.20.10">
    <property type="entry name" value="Lipoprotein localisation LolA/LolB/LppX"/>
    <property type="match status" value="1"/>
</dbReference>
<dbReference type="HAMAP" id="MF_00233">
    <property type="entry name" value="LolB"/>
    <property type="match status" value="1"/>
</dbReference>
<dbReference type="InterPro" id="IPR029046">
    <property type="entry name" value="LolA/LolB/LppX"/>
</dbReference>
<dbReference type="InterPro" id="IPR004565">
    <property type="entry name" value="OM_lipoprot_LolB"/>
</dbReference>
<dbReference type="NCBIfam" id="TIGR00548">
    <property type="entry name" value="lolB"/>
    <property type="match status" value="1"/>
</dbReference>
<dbReference type="Pfam" id="PF03550">
    <property type="entry name" value="LolB"/>
    <property type="match status" value="1"/>
</dbReference>
<dbReference type="SUPFAM" id="SSF89392">
    <property type="entry name" value="Prokaryotic lipoproteins and lipoprotein localization factors"/>
    <property type="match status" value="1"/>
</dbReference>
<dbReference type="PROSITE" id="PS51257">
    <property type="entry name" value="PROKAR_LIPOPROTEIN"/>
    <property type="match status" value="1"/>
</dbReference>
<proteinExistence type="inferred from homology"/>
<sequence>MPMRKRHFYRLLPLASLLLAACTIPVSKGPATSPTSPQWRQHEQQLQQLGQFETRGAFAYLSDKQKVYARFFWQQTSPERYRLLLTNPLGSTELELVVQPGVTQLTDNQGKRYVSDDPQEMIQKLTGMSIPLESLRQWILGLPGDTPNFTLDDKYRLKKLTYQQNGVTWVVNYQEYNTQVTPPLPSRLELNQDGQRIKLKMDSWTIK</sequence>
<reference key="1">
    <citation type="journal article" date="2007" name="PLoS Genet.">
        <title>The complete genome sequence of Yersinia pseudotuberculosis IP31758, the causative agent of Far East scarlet-like fever.</title>
        <authorList>
            <person name="Eppinger M."/>
            <person name="Rosovitz M.J."/>
            <person name="Fricke W.F."/>
            <person name="Rasko D.A."/>
            <person name="Kokorina G."/>
            <person name="Fayolle C."/>
            <person name="Lindler L.E."/>
            <person name="Carniel E."/>
            <person name="Ravel J."/>
        </authorList>
    </citation>
    <scope>NUCLEOTIDE SEQUENCE [LARGE SCALE GENOMIC DNA]</scope>
    <source>
        <strain>IP 31758</strain>
    </source>
</reference>
<name>LOLB_YERP3</name>
<protein>
    <recommendedName>
        <fullName evidence="1">Outer-membrane lipoprotein LolB</fullName>
    </recommendedName>
</protein>
<evidence type="ECO:0000255" key="1">
    <source>
        <dbReference type="HAMAP-Rule" id="MF_00233"/>
    </source>
</evidence>
<organism>
    <name type="scientific">Yersinia pseudotuberculosis serotype O:1b (strain IP 31758)</name>
    <dbReference type="NCBI Taxonomy" id="349747"/>
    <lineage>
        <taxon>Bacteria</taxon>
        <taxon>Pseudomonadati</taxon>
        <taxon>Pseudomonadota</taxon>
        <taxon>Gammaproteobacteria</taxon>
        <taxon>Enterobacterales</taxon>
        <taxon>Yersiniaceae</taxon>
        <taxon>Yersinia</taxon>
    </lineage>
</organism>
<comment type="function">
    <text evidence="1">Plays a critical role in the incorporation of lipoproteins in the outer membrane after they are released by the LolA protein.</text>
</comment>
<comment type="subunit">
    <text evidence="1">Monomer.</text>
</comment>
<comment type="subcellular location">
    <subcellularLocation>
        <location evidence="1">Cell outer membrane</location>
        <topology evidence="1">Lipid-anchor</topology>
    </subcellularLocation>
</comment>
<comment type="similarity">
    <text evidence="1">Belongs to the LolB family.</text>
</comment>
<keyword id="KW-0998">Cell outer membrane</keyword>
<keyword id="KW-0143">Chaperone</keyword>
<keyword id="KW-0449">Lipoprotein</keyword>
<keyword id="KW-0472">Membrane</keyword>
<keyword id="KW-0564">Palmitate</keyword>
<keyword id="KW-0653">Protein transport</keyword>
<keyword id="KW-0732">Signal</keyword>
<keyword id="KW-0813">Transport</keyword>
<accession>A7FIG3</accession>